<feature type="chain" id="PRO_0000173620" description="Transaldolase">
    <location>
        <begin position="1"/>
        <end position="316"/>
    </location>
</feature>
<feature type="active site" description="Schiff-base intermediate with substrate" evidence="1">
    <location>
        <position position="132"/>
    </location>
</feature>
<keyword id="KW-0963">Cytoplasm</keyword>
<keyword id="KW-0570">Pentose shunt</keyword>
<keyword id="KW-1185">Reference proteome</keyword>
<keyword id="KW-0704">Schiff base</keyword>
<keyword id="KW-0808">Transferase</keyword>
<organism>
    <name type="scientific">Vibrio cholerae serotype O1 (strain ATCC 39315 / El Tor Inaba N16961)</name>
    <dbReference type="NCBI Taxonomy" id="243277"/>
    <lineage>
        <taxon>Bacteria</taxon>
        <taxon>Pseudomonadati</taxon>
        <taxon>Pseudomonadota</taxon>
        <taxon>Gammaproteobacteria</taxon>
        <taxon>Vibrionales</taxon>
        <taxon>Vibrionaceae</taxon>
        <taxon>Vibrio</taxon>
    </lineage>
</organism>
<protein>
    <recommendedName>
        <fullName evidence="1">Transaldolase</fullName>
        <ecNumber evidence="1">2.2.1.2</ecNumber>
    </recommendedName>
</protein>
<reference key="1">
    <citation type="journal article" date="2000" name="Nature">
        <title>DNA sequence of both chromosomes of the cholera pathogen Vibrio cholerae.</title>
        <authorList>
            <person name="Heidelberg J.F."/>
            <person name="Eisen J.A."/>
            <person name="Nelson W.C."/>
            <person name="Clayton R.A."/>
            <person name="Gwinn M.L."/>
            <person name="Dodson R.J."/>
            <person name="Haft D.H."/>
            <person name="Hickey E.K."/>
            <person name="Peterson J.D."/>
            <person name="Umayam L.A."/>
            <person name="Gill S.R."/>
            <person name="Nelson K.E."/>
            <person name="Read T.D."/>
            <person name="Tettelin H."/>
            <person name="Richardson D.L."/>
            <person name="Ermolaeva M.D."/>
            <person name="Vamathevan J.J."/>
            <person name="Bass S."/>
            <person name="Qin H."/>
            <person name="Dragoi I."/>
            <person name="Sellers P."/>
            <person name="McDonald L.A."/>
            <person name="Utterback T.R."/>
            <person name="Fleischmann R.D."/>
            <person name="Nierman W.C."/>
            <person name="White O."/>
            <person name="Salzberg S.L."/>
            <person name="Smith H.O."/>
            <person name="Colwell R.R."/>
            <person name="Mekalanos J.J."/>
            <person name="Venter J.C."/>
            <person name="Fraser C.M."/>
        </authorList>
    </citation>
    <scope>NUCLEOTIDE SEQUENCE [LARGE SCALE GENOMIC DNA]</scope>
    <source>
        <strain>ATCC 39315 / El Tor Inaba N16961</strain>
    </source>
</reference>
<sequence length="316" mass="34636">MSNKLAQLRKLTTVVADTGEIDAIKKYQPEDATTNPSLILKAAQIAEYAPLIDQAIAYAKTQSNDKAQQVQDTCDMLAVNIGKEILKTIPGRISTEVDARLSYDTERSVAKARQLVKMYNDAGISNDRILIKLASTWEGIRAAEILEKEGINCNLTLLFSFAQARACAEAGVFLISPFVGRIMDWYKAKEGRDFAASEDPGVLSVTKIYNYYKEHGYKTVVMGASFRNIGEILELAGCDRLTIAPSLLAELEAAEGELVAKLVDSKGSKARPAPMTHSEFLWEHNLDAMAVEKLAEGIRNFAVDQGKLEAMIAAKL</sequence>
<accession>Q9KLW8</accession>
<gene>
    <name evidence="1" type="primary">tal</name>
    <name type="ordered locus">VC_A0623</name>
</gene>
<dbReference type="EC" id="2.2.1.2" evidence="1"/>
<dbReference type="EMBL" id="AE003853">
    <property type="protein sequence ID" value="AAF96524.1"/>
    <property type="molecule type" value="Genomic_DNA"/>
</dbReference>
<dbReference type="PIR" id="B82437">
    <property type="entry name" value="B82437"/>
</dbReference>
<dbReference type="RefSeq" id="NP_233012.1">
    <property type="nucleotide sequence ID" value="NC_002506.1"/>
</dbReference>
<dbReference type="RefSeq" id="WP_000066347.1">
    <property type="nucleotide sequence ID" value="NZ_LT906615.1"/>
</dbReference>
<dbReference type="SMR" id="Q9KLW8"/>
<dbReference type="STRING" id="243277.VC_A0623"/>
<dbReference type="DNASU" id="2612553"/>
<dbReference type="EnsemblBacteria" id="AAF96524">
    <property type="protein sequence ID" value="AAF96524"/>
    <property type="gene ID" value="VC_A0623"/>
</dbReference>
<dbReference type="GeneID" id="94015280"/>
<dbReference type="KEGG" id="vch:VC_A0623"/>
<dbReference type="PATRIC" id="fig|243277.26.peg.3251"/>
<dbReference type="eggNOG" id="COG0176">
    <property type="taxonomic scope" value="Bacteria"/>
</dbReference>
<dbReference type="HOGENOM" id="CLU_047470_0_1_6"/>
<dbReference type="UniPathway" id="UPA00115">
    <property type="reaction ID" value="UER00414"/>
</dbReference>
<dbReference type="Proteomes" id="UP000000584">
    <property type="component" value="Chromosome 2"/>
</dbReference>
<dbReference type="GO" id="GO:0005829">
    <property type="term" value="C:cytosol"/>
    <property type="evidence" value="ECO:0000318"/>
    <property type="project" value="GO_Central"/>
</dbReference>
<dbReference type="GO" id="GO:0004801">
    <property type="term" value="F:transaldolase activity"/>
    <property type="evidence" value="ECO:0000250"/>
    <property type="project" value="UniProtKB"/>
</dbReference>
<dbReference type="GO" id="GO:0005975">
    <property type="term" value="P:carbohydrate metabolic process"/>
    <property type="evidence" value="ECO:0007669"/>
    <property type="project" value="InterPro"/>
</dbReference>
<dbReference type="GO" id="GO:0009052">
    <property type="term" value="P:pentose-phosphate shunt, non-oxidative branch"/>
    <property type="evidence" value="ECO:0000318"/>
    <property type="project" value="GO_Central"/>
</dbReference>
<dbReference type="CDD" id="cd00957">
    <property type="entry name" value="Transaldolase_TalAB"/>
    <property type="match status" value="1"/>
</dbReference>
<dbReference type="FunFam" id="3.20.20.70:FF:000002">
    <property type="entry name" value="Transaldolase"/>
    <property type="match status" value="1"/>
</dbReference>
<dbReference type="Gene3D" id="3.20.20.70">
    <property type="entry name" value="Aldolase class I"/>
    <property type="match status" value="1"/>
</dbReference>
<dbReference type="HAMAP" id="MF_00492">
    <property type="entry name" value="Transaldolase_1"/>
    <property type="match status" value="1"/>
</dbReference>
<dbReference type="InterPro" id="IPR013785">
    <property type="entry name" value="Aldolase_TIM"/>
</dbReference>
<dbReference type="InterPro" id="IPR001585">
    <property type="entry name" value="TAL/FSA"/>
</dbReference>
<dbReference type="InterPro" id="IPR004730">
    <property type="entry name" value="Transaldolase_1"/>
</dbReference>
<dbReference type="InterPro" id="IPR018225">
    <property type="entry name" value="Transaldolase_AS"/>
</dbReference>
<dbReference type="NCBIfam" id="NF009001">
    <property type="entry name" value="PRK12346.1"/>
    <property type="match status" value="1"/>
</dbReference>
<dbReference type="NCBIfam" id="TIGR00874">
    <property type="entry name" value="talAB"/>
    <property type="match status" value="1"/>
</dbReference>
<dbReference type="PANTHER" id="PTHR10683">
    <property type="entry name" value="TRANSALDOLASE"/>
    <property type="match status" value="1"/>
</dbReference>
<dbReference type="PANTHER" id="PTHR10683:SF18">
    <property type="entry name" value="TRANSALDOLASE"/>
    <property type="match status" value="1"/>
</dbReference>
<dbReference type="Pfam" id="PF00923">
    <property type="entry name" value="TAL_FSA"/>
    <property type="match status" value="1"/>
</dbReference>
<dbReference type="SUPFAM" id="SSF51569">
    <property type="entry name" value="Aldolase"/>
    <property type="match status" value="1"/>
</dbReference>
<dbReference type="PROSITE" id="PS01054">
    <property type="entry name" value="TRANSALDOLASE_1"/>
    <property type="match status" value="1"/>
</dbReference>
<dbReference type="PROSITE" id="PS00958">
    <property type="entry name" value="TRANSALDOLASE_2"/>
    <property type="match status" value="1"/>
</dbReference>
<proteinExistence type="inferred from homology"/>
<evidence type="ECO:0000255" key="1">
    <source>
        <dbReference type="HAMAP-Rule" id="MF_00492"/>
    </source>
</evidence>
<evidence type="ECO:0000305" key="2"/>
<name>TAL_VIBCH</name>
<comment type="function">
    <text evidence="1">Transaldolase is important for the balance of metabolites in the pentose-phosphate pathway.</text>
</comment>
<comment type="catalytic activity">
    <reaction evidence="1">
        <text>D-sedoheptulose 7-phosphate + D-glyceraldehyde 3-phosphate = D-erythrose 4-phosphate + beta-D-fructose 6-phosphate</text>
        <dbReference type="Rhea" id="RHEA:17053"/>
        <dbReference type="ChEBI" id="CHEBI:16897"/>
        <dbReference type="ChEBI" id="CHEBI:57483"/>
        <dbReference type="ChEBI" id="CHEBI:57634"/>
        <dbReference type="ChEBI" id="CHEBI:59776"/>
        <dbReference type="EC" id="2.2.1.2"/>
    </reaction>
</comment>
<comment type="pathway">
    <text evidence="1">Carbohydrate degradation; pentose phosphate pathway; D-glyceraldehyde 3-phosphate and beta-D-fructose 6-phosphate from D-ribose 5-phosphate and D-xylulose 5-phosphate (non-oxidative stage): step 2/3.</text>
</comment>
<comment type="subcellular location">
    <subcellularLocation>
        <location evidence="1">Cytoplasm</location>
    </subcellularLocation>
</comment>
<comment type="similarity">
    <text evidence="1 2">Belongs to the transaldolase family. Type 1 subfamily.</text>
</comment>